<protein>
    <recommendedName>
        <fullName>G-protein coupled estrogen receptor 1</fullName>
    </recommendedName>
    <alternativeName>
        <fullName>Chemoattractant receptor-like 2</fullName>
    </alternativeName>
    <alternativeName>
        <fullName>G protein-coupled estrogen receptor 1</fullName>
    </alternativeName>
    <alternativeName>
        <fullName>G-protein coupled receptor 30</fullName>
    </alternativeName>
    <alternativeName>
        <fullName>Membrane estrogen receptor</fullName>
        <shortName>mER</shortName>
    </alternativeName>
</protein>
<dbReference type="EMBL" id="AK018203">
    <property type="protein sequence ID" value="BAB31118.1"/>
    <property type="molecule type" value="mRNA"/>
</dbReference>
<dbReference type="EMBL" id="AK030375">
    <property type="protein sequence ID" value="BAC26930.1"/>
    <property type="molecule type" value="mRNA"/>
</dbReference>
<dbReference type="EMBL" id="CH466529">
    <property type="protein sequence ID" value="EDL19153.1"/>
    <property type="molecule type" value="Genomic_DNA"/>
</dbReference>
<dbReference type="EMBL" id="BC138598">
    <property type="protein sequence ID" value="AAI38599.1"/>
    <property type="molecule type" value="mRNA"/>
</dbReference>
<dbReference type="EMBL" id="BC138616">
    <property type="protein sequence ID" value="AAI38617.1"/>
    <property type="molecule type" value="mRNA"/>
</dbReference>
<dbReference type="CCDS" id="CCDS19811.1"/>
<dbReference type="RefSeq" id="NP_084047.2">
    <property type="nucleotide sequence ID" value="NM_029771.4"/>
</dbReference>
<dbReference type="RefSeq" id="XP_006504820.1">
    <property type="nucleotide sequence ID" value="XM_006504757.4"/>
</dbReference>
<dbReference type="RefSeq" id="XP_036021486.1">
    <property type="nucleotide sequence ID" value="XM_036165593.1"/>
</dbReference>
<dbReference type="SMR" id="Q8BMP4"/>
<dbReference type="FunCoup" id="Q8BMP4">
    <property type="interactions" value="465"/>
</dbReference>
<dbReference type="STRING" id="10090.ENSMUSP00000080370"/>
<dbReference type="GlyCosmos" id="Q8BMP4">
    <property type="glycosylation" value="2 sites, No reported glycans"/>
</dbReference>
<dbReference type="GlyGen" id="Q8BMP4">
    <property type="glycosylation" value="3 sites"/>
</dbReference>
<dbReference type="PhosphoSitePlus" id="Q8BMP4"/>
<dbReference type="PaxDb" id="10090-ENSMUSP00000080370"/>
<dbReference type="Antibodypedia" id="10887">
    <property type="antibodies" value="426 antibodies from 33 providers"/>
</dbReference>
<dbReference type="DNASU" id="76854"/>
<dbReference type="Ensembl" id="ENSMUST00000066211.5">
    <property type="protein sequence ID" value="ENSMUSP00000080370.4"/>
    <property type="gene ID" value="ENSMUSG00000053647.5"/>
</dbReference>
<dbReference type="GeneID" id="76854"/>
<dbReference type="KEGG" id="mmu:76854"/>
<dbReference type="UCSC" id="uc009agr.2">
    <property type="organism name" value="mouse"/>
</dbReference>
<dbReference type="AGR" id="MGI:1924104"/>
<dbReference type="CTD" id="2852"/>
<dbReference type="MGI" id="MGI:1924104">
    <property type="gene designation" value="Gper1"/>
</dbReference>
<dbReference type="VEuPathDB" id="HostDB:ENSMUSG00000053647"/>
<dbReference type="eggNOG" id="ENOG502QU56">
    <property type="taxonomic scope" value="Eukaryota"/>
</dbReference>
<dbReference type="GeneTree" id="ENSGT00940000154307"/>
<dbReference type="HOGENOM" id="CLU_009579_8_3_1"/>
<dbReference type="InParanoid" id="Q8BMP4"/>
<dbReference type="OMA" id="FRTKQHA"/>
<dbReference type="OrthoDB" id="5957382at2759"/>
<dbReference type="PhylomeDB" id="Q8BMP4"/>
<dbReference type="TreeFam" id="TF333506"/>
<dbReference type="Reactome" id="R-MMU-375276">
    <property type="pathway name" value="Peptide ligand-binding receptors"/>
</dbReference>
<dbReference type="Reactome" id="R-MMU-418594">
    <property type="pathway name" value="G alpha (i) signalling events"/>
</dbReference>
<dbReference type="Reactome" id="R-MMU-9634597">
    <property type="pathway name" value="GPER1 signaling"/>
</dbReference>
<dbReference type="BioGRID-ORCS" id="76854">
    <property type="hits" value="2 hits in 77 CRISPR screens"/>
</dbReference>
<dbReference type="PRO" id="PR:Q8BMP4"/>
<dbReference type="Proteomes" id="UP000000589">
    <property type="component" value="Chromosome 5"/>
</dbReference>
<dbReference type="RNAct" id="Q8BMP4">
    <property type="molecule type" value="protein"/>
</dbReference>
<dbReference type="Bgee" id="ENSMUSG00000053647">
    <property type="expression patterns" value="Expressed in external carotid artery and 182 other cell types or tissues"/>
</dbReference>
<dbReference type="GO" id="GO:0030424">
    <property type="term" value="C:axon"/>
    <property type="evidence" value="ECO:0000250"/>
    <property type="project" value="UniProtKB"/>
</dbReference>
<dbReference type="GO" id="GO:0043679">
    <property type="term" value="C:axon terminus"/>
    <property type="evidence" value="ECO:0000250"/>
    <property type="project" value="UniProtKB"/>
</dbReference>
<dbReference type="GO" id="GO:0005737">
    <property type="term" value="C:cytoplasm"/>
    <property type="evidence" value="ECO:0000314"/>
    <property type="project" value="UniProtKB"/>
</dbReference>
<dbReference type="GO" id="GO:0030659">
    <property type="term" value="C:cytoplasmic vesicle membrane"/>
    <property type="evidence" value="ECO:0000250"/>
    <property type="project" value="UniProtKB"/>
</dbReference>
<dbReference type="GO" id="GO:0005829">
    <property type="term" value="C:cytosol"/>
    <property type="evidence" value="ECO:0007669"/>
    <property type="project" value="Ensembl"/>
</dbReference>
<dbReference type="GO" id="GO:0030425">
    <property type="term" value="C:dendrite"/>
    <property type="evidence" value="ECO:0000250"/>
    <property type="project" value="UniProtKB"/>
</dbReference>
<dbReference type="GO" id="GO:0043198">
    <property type="term" value="C:dendritic shaft"/>
    <property type="evidence" value="ECO:0000250"/>
    <property type="project" value="UniProtKB"/>
</dbReference>
<dbReference type="GO" id="GO:0044327">
    <property type="term" value="C:dendritic spine head"/>
    <property type="evidence" value="ECO:0000250"/>
    <property type="project" value="UniProtKB"/>
</dbReference>
<dbReference type="GO" id="GO:0032591">
    <property type="term" value="C:dendritic spine membrane"/>
    <property type="evidence" value="ECO:0000250"/>
    <property type="project" value="UniProtKB"/>
</dbReference>
<dbReference type="GO" id="GO:0005769">
    <property type="term" value="C:early endosome"/>
    <property type="evidence" value="ECO:0000250"/>
    <property type="project" value="UniProtKB"/>
</dbReference>
<dbReference type="GO" id="GO:0005783">
    <property type="term" value="C:endoplasmic reticulum"/>
    <property type="evidence" value="ECO:0000250"/>
    <property type="project" value="UniProtKB"/>
</dbReference>
<dbReference type="GO" id="GO:0005789">
    <property type="term" value="C:endoplasmic reticulum membrane"/>
    <property type="evidence" value="ECO:0007669"/>
    <property type="project" value="UniProtKB-SubCell"/>
</dbReference>
<dbReference type="GO" id="GO:0005794">
    <property type="term" value="C:Golgi apparatus"/>
    <property type="evidence" value="ECO:0000250"/>
    <property type="project" value="UniProtKB"/>
</dbReference>
<dbReference type="GO" id="GO:0000139">
    <property type="term" value="C:Golgi membrane"/>
    <property type="evidence" value="ECO:0007669"/>
    <property type="project" value="UniProtKB-SubCell"/>
</dbReference>
<dbReference type="GO" id="GO:0098686">
    <property type="term" value="C:hippocampal mossy fiber to CA3 synapse"/>
    <property type="evidence" value="ECO:0000314"/>
    <property type="project" value="SynGO"/>
</dbReference>
<dbReference type="GO" id="GO:0045095">
    <property type="term" value="C:keratin filament"/>
    <property type="evidence" value="ECO:0000250"/>
    <property type="project" value="UniProtKB"/>
</dbReference>
<dbReference type="GO" id="GO:0031966">
    <property type="term" value="C:mitochondrial membrane"/>
    <property type="evidence" value="ECO:0000250"/>
    <property type="project" value="UniProtKB"/>
</dbReference>
<dbReference type="GO" id="GO:0005635">
    <property type="term" value="C:nuclear envelope"/>
    <property type="evidence" value="ECO:0000250"/>
    <property type="project" value="UniProtKB"/>
</dbReference>
<dbReference type="GO" id="GO:0005730">
    <property type="term" value="C:nucleolus"/>
    <property type="evidence" value="ECO:0007669"/>
    <property type="project" value="Ensembl"/>
</dbReference>
<dbReference type="GO" id="GO:0005654">
    <property type="term" value="C:nucleoplasm"/>
    <property type="evidence" value="ECO:0007669"/>
    <property type="project" value="Ensembl"/>
</dbReference>
<dbReference type="GO" id="GO:0005634">
    <property type="term" value="C:nucleus"/>
    <property type="evidence" value="ECO:0000250"/>
    <property type="project" value="UniProtKB"/>
</dbReference>
<dbReference type="GO" id="GO:0048471">
    <property type="term" value="C:perinuclear region of cytoplasm"/>
    <property type="evidence" value="ECO:0000250"/>
    <property type="project" value="UniProtKB"/>
</dbReference>
<dbReference type="GO" id="GO:0005886">
    <property type="term" value="C:plasma membrane"/>
    <property type="evidence" value="ECO:0000314"/>
    <property type="project" value="UniProtKB"/>
</dbReference>
<dbReference type="GO" id="GO:0014069">
    <property type="term" value="C:postsynaptic density"/>
    <property type="evidence" value="ECO:0000250"/>
    <property type="project" value="UniProtKB"/>
</dbReference>
<dbReference type="GO" id="GO:0045211">
    <property type="term" value="C:postsynaptic membrane"/>
    <property type="evidence" value="ECO:0007669"/>
    <property type="project" value="UniProtKB-KW"/>
</dbReference>
<dbReference type="GO" id="GO:0048786">
    <property type="term" value="C:presynaptic active zone"/>
    <property type="evidence" value="ECO:0000250"/>
    <property type="project" value="UniProtKB"/>
</dbReference>
<dbReference type="GO" id="GO:0042734">
    <property type="term" value="C:presynaptic membrane"/>
    <property type="evidence" value="ECO:0000250"/>
    <property type="project" value="UniProtKB"/>
</dbReference>
<dbReference type="GO" id="GO:0055037">
    <property type="term" value="C:recycling endosome"/>
    <property type="evidence" value="ECO:0000250"/>
    <property type="project" value="UniProtKB"/>
</dbReference>
<dbReference type="GO" id="GO:0005802">
    <property type="term" value="C:trans-Golgi network"/>
    <property type="evidence" value="ECO:0000250"/>
    <property type="project" value="UniProtKB"/>
</dbReference>
<dbReference type="GO" id="GO:0003682">
    <property type="term" value="F:chromatin binding"/>
    <property type="evidence" value="ECO:0007669"/>
    <property type="project" value="Ensembl"/>
</dbReference>
<dbReference type="GO" id="GO:0038054">
    <property type="term" value="F:G protein-coupled estrogen receptor activity"/>
    <property type="evidence" value="ECO:0000250"/>
    <property type="project" value="UniProtKB"/>
</dbReference>
<dbReference type="GO" id="GO:0030284">
    <property type="term" value="F:nuclear estrogen receptor activity"/>
    <property type="evidence" value="ECO:0000314"/>
    <property type="project" value="UniProtKB"/>
</dbReference>
<dbReference type="GO" id="GO:0005496">
    <property type="term" value="F:steroid binding"/>
    <property type="evidence" value="ECO:0000250"/>
    <property type="project" value="UniProtKB"/>
</dbReference>
<dbReference type="GO" id="GO:1990239">
    <property type="term" value="F:steroid hormone binding"/>
    <property type="evidence" value="ECO:0000250"/>
    <property type="project" value="UniProtKB"/>
</dbReference>
<dbReference type="GO" id="GO:0007189">
    <property type="term" value="P:adenylate cyclase-activating G protein-coupled receptor signaling pathway"/>
    <property type="evidence" value="ECO:0000314"/>
    <property type="project" value="UniProtKB"/>
</dbReference>
<dbReference type="GO" id="GO:0030263">
    <property type="term" value="P:apoptotic chromosome condensation"/>
    <property type="evidence" value="ECO:0000250"/>
    <property type="project" value="UniProtKB"/>
</dbReference>
<dbReference type="GO" id="GO:0030154">
    <property type="term" value="P:cell differentiation"/>
    <property type="evidence" value="ECO:0007669"/>
    <property type="project" value="UniProtKB-KW"/>
</dbReference>
<dbReference type="GO" id="GO:0071392">
    <property type="term" value="P:cellular response to estradiol stimulus"/>
    <property type="evidence" value="ECO:0000314"/>
    <property type="project" value="UniProtKB"/>
</dbReference>
<dbReference type="GO" id="GO:0071333">
    <property type="term" value="P:cellular response to glucose stimulus"/>
    <property type="evidence" value="ECO:0000314"/>
    <property type="project" value="UniProtKB"/>
</dbReference>
<dbReference type="GO" id="GO:0071389">
    <property type="term" value="P:cellular response to mineralocorticoid stimulus"/>
    <property type="evidence" value="ECO:0000250"/>
    <property type="project" value="UniProtKB"/>
</dbReference>
<dbReference type="GO" id="GO:0071375">
    <property type="term" value="P:cellular response to peptide hormone stimulus"/>
    <property type="evidence" value="ECO:0000250"/>
    <property type="project" value="UniProtKB"/>
</dbReference>
<dbReference type="GO" id="GO:0071356">
    <property type="term" value="P:cellular response to tumor necrosis factor"/>
    <property type="evidence" value="ECO:0000250"/>
    <property type="project" value="UniProtKB"/>
</dbReference>
<dbReference type="GO" id="GO:0006954">
    <property type="term" value="P:inflammatory response"/>
    <property type="evidence" value="ECO:0007669"/>
    <property type="project" value="UniProtKB-KW"/>
</dbReference>
<dbReference type="GO" id="GO:0045087">
    <property type="term" value="P:innate immune response"/>
    <property type="evidence" value="ECO:0007669"/>
    <property type="project" value="UniProtKB-KW"/>
</dbReference>
<dbReference type="GO" id="GO:0050804">
    <property type="term" value="P:modulation of chemical synaptic transmission"/>
    <property type="evidence" value="ECO:0000314"/>
    <property type="project" value="SynGO"/>
</dbReference>
<dbReference type="GO" id="GO:0010948">
    <property type="term" value="P:negative regulation of cell cycle process"/>
    <property type="evidence" value="ECO:0007669"/>
    <property type="project" value="Ensembl"/>
</dbReference>
<dbReference type="GO" id="GO:0008285">
    <property type="term" value="P:negative regulation of cell population proliferation"/>
    <property type="evidence" value="ECO:0000250"/>
    <property type="project" value="UniProtKB"/>
</dbReference>
<dbReference type="GO" id="GO:0070373">
    <property type="term" value="P:negative regulation of ERK1 and ERK2 cascade"/>
    <property type="evidence" value="ECO:0007669"/>
    <property type="project" value="Ensembl"/>
</dbReference>
<dbReference type="GO" id="GO:0045599">
    <property type="term" value="P:negative regulation of fat cell differentiation"/>
    <property type="evidence" value="ECO:0000314"/>
    <property type="project" value="UniProtKB"/>
</dbReference>
<dbReference type="GO" id="GO:0010629">
    <property type="term" value="P:negative regulation of gene expression"/>
    <property type="evidence" value="ECO:0000250"/>
    <property type="project" value="UniProtKB"/>
</dbReference>
<dbReference type="GO" id="GO:0050728">
    <property type="term" value="P:negative regulation of inflammatory response"/>
    <property type="evidence" value="ECO:0000250"/>
    <property type="project" value="UniProtKB"/>
</dbReference>
<dbReference type="GO" id="GO:0002695">
    <property type="term" value="P:negative regulation of leukocyte activation"/>
    <property type="evidence" value="ECO:0000250"/>
    <property type="project" value="UniProtKB"/>
</dbReference>
<dbReference type="GO" id="GO:0051055">
    <property type="term" value="P:negative regulation of lipid biosynthetic process"/>
    <property type="evidence" value="ECO:0000314"/>
    <property type="project" value="UniProtKB"/>
</dbReference>
<dbReference type="GO" id="GO:0051898">
    <property type="term" value="P:negative regulation of phosphatidylinositol 3-kinase/protein kinase B signal transduction"/>
    <property type="evidence" value="ECO:0007669"/>
    <property type="project" value="Ensembl"/>
</dbReference>
<dbReference type="GO" id="GO:1904706">
    <property type="term" value="P:negative regulation of vascular associated smooth muscle cell proliferation"/>
    <property type="evidence" value="ECO:0007669"/>
    <property type="project" value="Ensembl"/>
</dbReference>
<dbReference type="GO" id="GO:0007399">
    <property type="term" value="P:nervous system development"/>
    <property type="evidence" value="ECO:0007669"/>
    <property type="project" value="UniProtKB-KW"/>
</dbReference>
<dbReference type="GO" id="GO:0019228">
    <property type="term" value="P:neuronal action potential"/>
    <property type="evidence" value="ECO:0000250"/>
    <property type="project" value="UniProtKB"/>
</dbReference>
<dbReference type="GO" id="GO:0030264">
    <property type="term" value="P:nuclear fragmentation involved in apoptotic nuclear change"/>
    <property type="evidence" value="ECO:0000250"/>
    <property type="project" value="UniProtKB"/>
</dbReference>
<dbReference type="GO" id="GO:0030518">
    <property type="term" value="P:nuclear receptor-mediated steroid hormone signaling pathway"/>
    <property type="evidence" value="ECO:0000250"/>
    <property type="project" value="UniProtKB"/>
</dbReference>
<dbReference type="GO" id="GO:0043065">
    <property type="term" value="P:positive regulation of apoptotic process"/>
    <property type="evidence" value="ECO:0000250"/>
    <property type="project" value="UniProtKB"/>
</dbReference>
<dbReference type="GO" id="GO:2000724">
    <property type="term" value="P:positive regulation of cardiac vascular smooth muscle cell differentiation"/>
    <property type="evidence" value="ECO:0007669"/>
    <property type="project" value="Ensembl"/>
</dbReference>
<dbReference type="GO" id="GO:0030335">
    <property type="term" value="P:positive regulation of cell migration"/>
    <property type="evidence" value="ECO:0000250"/>
    <property type="project" value="UniProtKB"/>
</dbReference>
<dbReference type="GO" id="GO:0008284">
    <property type="term" value="P:positive regulation of cell population proliferation"/>
    <property type="evidence" value="ECO:0000250"/>
    <property type="project" value="UniProtKB"/>
</dbReference>
<dbReference type="GO" id="GO:0007204">
    <property type="term" value="P:positive regulation of cytosolic calcium ion concentration"/>
    <property type="evidence" value="ECO:0000314"/>
    <property type="project" value="UniProtKB"/>
</dbReference>
<dbReference type="GO" id="GO:2000353">
    <property type="term" value="P:positive regulation of endothelial cell apoptotic process"/>
    <property type="evidence" value="ECO:0000250"/>
    <property type="project" value="UniProtKB"/>
</dbReference>
<dbReference type="GO" id="GO:0045742">
    <property type="term" value="P:positive regulation of epidermal growth factor receptor signaling pathway"/>
    <property type="evidence" value="ECO:0000314"/>
    <property type="project" value="UniProtKB"/>
</dbReference>
<dbReference type="GO" id="GO:0070374">
    <property type="term" value="P:positive regulation of ERK1 and ERK2 cascade"/>
    <property type="evidence" value="ECO:0000314"/>
    <property type="project" value="UniProtKB"/>
</dbReference>
<dbReference type="GO" id="GO:2001238">
    <property type="term" value="P:positive regulation of extrinsic apoptotic signaling pathway"/>
    <property type="evidence" value="ECO:0000250"/>
    <property type="project" value="UniProtKB"/>
</dbReference>
<dbReference type="GO" id="GO:0045745">
    <property type="term" value="P:positive regulation of G protein-coupled receptor signaling pathway"/>
    <property type="evidence" value="ECO:0000250"/>
    <property type="project" value="UniProtKB"/>
</dbReference>
<dbReference type="GO" id="GO:0010628">
    <property type="term" value="P:positive regulation of gene expression"/>
    <property type="evidence" value="ECO:0000250"/>
    <property type="project" value="UniProtKB"/>
</dbReference>
<dbReference type="GO" id="GO:0032962">
    <property type="term" value="P:positive regulation of inositol trisphosphate biosynthetic process"/>
    <property type="evidence" value="ECO:0000250"/>
    <property type="project" value="UniProtKB"/>
</dbReference>
<dbReference type="GO" id="GO:0032024">
    <property type="term" value="P:positive regulation of insulin secretion"/>
    <property type="evidence" value="ECO:0000314"/>
    <property type="project" value="UniProtKB"/>
</dbReference>
<dbReference type="GO" id="GO:0043410">
    <property type="term" value="P:positive regulation of MAPK cascade"/>
    <property type="evidence" value="ECO:0000314"/>
    <property type="project" value="UniProtKB"/>
</dbReference>
<dbReference type="GO" id="GO:0050769">
    <property type="term" value="P:positive regulation of neurogenesis"/>
    <property type="evidence" value="ECO:0000314"/>
    <property type="project" value="UniProtKB"/>
</dbReference>
<dbReference type="GO" id="GO:0001956">
    <property type="term" value="P:positive regulation of neurotransmitter secretion"/>
    <property type="evidence" value="ECO:0000250"/>
    <property type="project" value="UniProtKB"/>
</dbReference>
<dbReference type="GO" id="GO:0051897">
    <property type="term" value="P:positive regulation of phosphatidylinositol 3-kinase/protein kinase B signal transduction"/>
    <property type="evidence" value="ECO:0000250"/>
    <property type="project" value="UniProtKB"/>
</dbReference>
<dbReference type="GO" id="GO:1903078">
    <property type="term" value="P:positive regulation of protein localization to plasma membrane"/>
    <property type="evidence" value="ECO:0000250"/>
    <property type="project" value="UniProtKB"/>
</dbReference>
<dbReference type="GO" id="GO:0001934">
    <property type="term" value="P:positive regulation of protein phosphorylation"/>
    <property type="evidence" value="ECO:0000314"/>
    <property type="project" value="UniProtKB"/>
</dbReference>
<dbReference type="GO" id="GO:0090200">
    <property type="term" value="P:positive regulation of release of cytochrome c from mitochondria"/>
    <property type="evidence" value="ECO:0000250"/>
    <property type="project" value="UniProtKB"/>
</dbReference>
<dbReference type="GO" id="GO:0051281">
    <property type="term" value="P:positive regulation of release of sequestered calcium ion into cytosol"/>
    <property type="evidence" value="ECO:0000250"/>
    <property type="project" value="UniProtKB"/>
</dbReference>
<dbReference type="GO" id="GO:0045944">
    <property type="term" value="P:positive regulation of transcription by RNA polymerase II"/>
    <property type="evidence" value="ECO:0000314"/>
    <property type="project" value="UniProtKB"/>
</dbReference>
<dbReference type="GO" id="GO:0070474">
    <property type="term" value="P:positive regulation of uterine smooth muscle contraction"/>
    <property type="evidence" value="ECO:0000250"/>
    <property type="project" value="UniProtKB"/>
</dbReference>
<dbReference type="GO" id="GO:0051726">
    <property type="term" value="P:regulation of cell cycle"/>
    <property type="evidence" value="ECO:0000314"/>
    <property type="project" value="UniProtKB"/>
</dbReference>
<dbReference type="GO" id="GO:0051480">
    <property type="term" value="P:regulation of cytosolic calcium ion concentration"/>
    <property type="evidence" value="ECO:0000250"/>
    <property type="project" value="UniProtKB"/>
</dbReference>
<dbReference type="GO" id="GO:0042311">
    <property type="term" value="P:vasodilation"/>
    <property type="evidence" value="ECO:0000250"/>
    <property type="project" value="UniProtKB"/>
</dbReference>
<dbReference type="CDD" id="cd14989">
    <property type="entry name" value="7tmA_GPER1"/>
    <property type="match status" value="1"/>
</dbReference>
<dbReference type="FunFam" id="1.20.1070.10:FF:000093">
    <property type="entry name" value="G-protein coupled estrogen receptor 1"/>
    <property type="match status" value="1"/>
</dbReference>
<dbReference type="Gene3D" id="1.20.1070.10">
    <property type="entry name" value="Rhodopsin 7-helix transmembrane proteins"/>
    <property type="match status" value="1"/>
</dbReference>
<dbReference type="InterPro" id="IPR000276">
    <property type="entry name" value="GPCR_Rhodpsn"/>
</dbReference>
<dbReference type="InterPro" id="IPR017452">
    <property type="entry name" value="GPCR_Rhodpsn_7TM"/>
</dbReference>
<dbReference type="InterPro" id="IPR047143">
    <property type="entry name" value="GPER1-like"/>
</dbReference>
<dbReference type="PANTHER" id="PTHR24226:SF2">
    <property type="entry name" value="G-PROTEIN COUPLED ESTROGEN RECEPTOR 1"/>
    <property type="match status" value="1"/>
</dbReference>
<dbReference type="PANTHER" id="PTHR24226">
    <property type="entry name" value="G-PROTEIN COUPLED RECEPTOR 182 AND ESTROGEN RECEPTOR 1"/>
    <property type="match status" value="1"/>
</dbReference>
<dbReference type="Pfam" id="PF00001">
    <property type="entry name" value="7tm_1"/>
    <property type="match status" value="1"/>
</dbReference>
<dbReference type="PRINTS" id="PR00237">
    <property type="entry name" value="GPCRRHODOPSN"/>
</dbReference>
<dbReference type="SUPFAM" id="SSF81321">
    <property type="entry name" value="Family A G protein-coupled receptor-like"/>
    <property type="match status" value="1"/>
</dbReference>
<dbReference type="PROSITE" id="PS00237">
    <property type="entry name" value="G_PROTEIN_RECEP_F1_1"/>
    <property type="match status" value="1"/>
</dbReference>
<dbReference type="PROSITE" id="PS50262">
    <property type="entry name" value="G_PROTEIN_RECEP_F1_2"/>
    <property type="match status" value="1"/>
</dbReference>
<sequence>MDATTPAQTVGVEIYLGPVWPAPSNSTPLALNLSLALREDAPGNLTGDLSEHQQYVIALFLSCLYTIFLFPIGFVGNILILVVNISFREKMTIPDLYFINLAAADLILVADSLIEVFNLDEQYYDIAVLCTFMSLFLQINMYSSVFFLTWMSFDRYLALAKAMRCGLFRTKHHARLSCGLIWMASVSATLVPFTAVHLRHTEEACFCFADVREVQWLEVTLGFIMPFAIIGLCYSLIVRALIRAHRHRGLRPRRQKALRMIFAVVLVFFICWLPENVFISVHLLQWTQPGDTPCKQSFRHAYPLTGHIVNLAAFSNSCLNPLIYSFLGETFRDKLRLYVEQKTSLPALNRFCHATLKAVIPDSTEQSEVRFSSAV</sequence>
<evidence type="ECO:0000250" key="1"/>
<evidence type="ECO:0000250" key="2">
    <source>
        <dbReference type="UniProtKB" id="Q99527"/>
    </source>
</evidence>
<evidence type="ECO:0000255" key="3"/>
<evidence type="ECO:0000255" key="4">
    <source>
        <dbReference type="PROSITE-ProRule" id="PRU00521"/>
    </source>
</evidence>
<evidence type="ECO:0000269" key="5">
    <source>
    </source>
</evidence>
<evidence type="ECO:0000269" key="6">
    <source>
    </source>
</evidence>
<evidence type="ECO:0000269" key="7">
    <source>
    </source>
</evidence>
<evidence type="ECO:0000269" key="8">
    <source>
    </source>
</evidence>
<evidence type="ECO:0000269" key="9">
    <source>
    </source>
</evidence>
<evidence type="ECO:0000269" key="10">
    <source>
    </source>
</evidence>
<evidence type="ECO:0000269" key="11">
    <source>
    </source>
</evidence>
<evidence type="ECO:0000269" key="12">
    <source>
    </source>
</evidence>
<evidence type="ECO:0000269" key="13">
    <source>
    </source>
</evidence>
<evidence type="ECO:0000269" key="14">
    <source>
    </source>
</evidence>
<evidence type="ECO:0000269" key="15">
    <source>
    </source>
</evidence>
<evidence type="ECO:0000269" key="16">
    <source>
    </source>
</evidence>
<evidence type="ECO:0000269" key="17">
    <source>
    </source>
</evidence>
<evidence type="ECO:0000269" key="18">
    <source>
    </source>
</evidence>
<evidence type="ECO:0000269" key="19">
    <source>
    </source>
</evidence>
<evidence type="ECO:0000269" key="20">
    <source>
    </source>
</evidence>
<evidence type="ECO:0000305" key="21"/>
<gene>
    <name type="primary">Gper1</name>
    <name type="synonym">Cmkrl2</name>
    <name type="synonym">Gper</name>
    <name type="synonym">Gpr30</name>
</gene>
<reference key="1">
    <citation type="journal article" date="2005" name="Science">
        <title>The transcriptional landscape of the mammalian genome.</title>
        <authorList>
            <person name="Carninci P."/>
            <person name="Kasukawa T."/>
            <person name="Katayama S."/>
            <person name="Gough J."/>
            <person name="Frith M.C."/>
            <person name="Maeda N."/>
            <person name="Oyama R."/>
            <person name="Ravasi T."/>
            <person name="Lenhard B."/>
            <person name="Wells C."/>
            <person name="Kodzius R."/>
            <person name="Shimokawa K."/>
            <person name="Bajic V.B."/>
            <person name="Brenner S.E."/>
            <person name="Batalov S."/>
            <person name="Forrest A.R."/>
            <person name="Zavolan M."/>
            <person name="Davis M.J."/>
            <person name="Wilming L.G."/>
            <person name="Aidinis V."/>
            <person name="Allen J.E."/>
            <person name="Ambesi-Impiombato A."/>
            <person name="Apweiler R."/>
            <person name="Aturaliya R.N."/>
            <person name="Bailey T.L."/>
            <person name="Bansal M."/>
            <person name="Baxter L."/>
            <person name="Beisel K.W."/>
            <person name="Bersano T."/>
            <person name="Bono H."/>
            <person name="Chalk A.M."/>
            <person name="Chiu K.P."/>
            <person name="Choudhary V."/>
            <person name="Christoffels A."/>
            <person name="Clutterbuck D.R."/>
            <person name="Crowe M.L."/>
            <person name="Dalla E."/>
            <person name="Dalrymple B.P."/>
            <person name="de Bono B."/>
            <person name="Della Gatta G."/>
            <person name="di Bernardo D."/>
            <person name="Down T."/>
            <person name="Engstrom P."/>
            <person name="Fagiolini M."/>
            <person name="Faulkner G."/>
            <person name="Fletcher C.F."/>
            <person name="Fukushima T."/>
            <person name="Furuno M."/>
            <person name="Futaki S."/>
            <person name="Gariboldi M."/>
            <person name="Georgii-Hemming P."/>
            <person name="Gingeras T.R."/>
            <person name="Gojobori T."/>
            <person name="Green R.E."/>
            <person name="Gustincich S."/>
            <person name="Harbers M."/>
            <person name="Hayashi Y."/>
            <person name="Hensch T.K."/>
            <person name="Hirokawa N."/>
            <person name="Hill D."/>
            <person name="Huminiecki L."/>
            <person name="Iacono M."/>
            <person name="Ikeo K."/>
            <person name="Iwama A."/>
            <person name="Ishikawa T."/>
            <person name="Jakt M."/>
            <person name="Kanapin A."/>
            <person name="Katoh M."/>
            <person name="Kawasawa Y."/>
            <person name="Kelso J."/>
            <person name="Kitamura H."/>
            <person name="Kitano H."/>
            <person name="Kollias G."/>
            <person name="Krishnan S.P."/>
            <person name="Kruger A."/>
            <person name="Kummerfeld S.K."/>
            <person name="Kurochkin I.V."/>
            <person name="Lareau L.F."/>
            <person name="Lazarevic D."/>
            <person name="Lipovich L."/>
            <person name="Liu J."/>
            <person name="Liuni S."/>
            <person name="McWilliam S."/>
            <person name="Madan Babu M."/>
            <person name="Madera M."/>
            <person name="Marchionni L."/>
            <person name="Matsuda H."/>
            <person name="Matsuzawa S."/>
            <person name="Miki H."/>
            <person name="Mignone F."/>
            <person name="Miyake S."/>
            <person name="Morris K."/>
            <person name="Mottagui-Tabar S."/>
            <person name="Mulder N."/>
            <person name="Nakano N."/>
            <person name="Nakauchi H."/>
            <person name="Ng P."/>
            <person name="Nilsson R."/>
            <person name="Nishiguchi S."/>
            <person name="Nishikawa S."/>
            <person name="Nori F."/>
            <person name="Ohara O."/>
            <person name="Okazaki Y."/>
            <person name="Orlando V."/>
            <person name="Pang K.C."/>
            <person name="Pavan W.J."/>
            <person name="Pavesi G."/>
            <person name="Pesole G."/>
            <person name="Petrovsky N."/>
            <person name="Piazza S."/>
            <person name="Reed J."/>
            <person name="Reid J.F."/>
            <person name="Ring B.Z."/>
            <person name="Ringwald M."/>
            <person name="Rost B."/>
            <person name="Ruan Y."/>
            <person name="Salzberg S.L."/>
            <person name="Sandelin A."/>
            <person name="Schneider C."/>
            <person name="Schoenbach C."/>
            <person name="Sekiguchi K."/>
            <person name="Semple C.A."/>
            <person name="Seno S."/>
            <person name="Sessa L."/>
            <person name="Sheng Y."/>
            <person name="Shibata Y."/>
            <person name="Shimada H."/>
            <person name="Shimada K."/>
            <person name="Silva D."/>
            <person name="Sinclair B."/>
            <person name="Sperling S."/>
            <person name="Stupka E."/>
            <person name="Sugiura K."/>
            <person name="Sultana R."/>
            <person name="Takenaka Y."/>
            <person name="Taki K."/>
            <person name="Tammoja K."/>
            <person name="Tan S.L."/>
            <person name="Tang S."/>
            <person name="Taylor M.S."/>
            <person name="Tegner J."/>
            <person name="Teichmann S.A."/>
            <person name="Ueda H.R."/>
            <person name="van Nimwegen E."/>
            <person name="Verardo R."/>
            <person name="Wei C.L."/>
            <person name="Yagi K."/>
            <person name="Yamanishi H."/>
            <person name="Zabarovsky E."/>
            <person name="Zhu S."/>
            <person name="Zimmer A."/>
            <person name="Hide W."/>
            <person name="Bult C."/>
            <person name="Grimmond S.M."/>
            <person name="Teasdale R.D."/>
            <person name="Liu E.T."/>
            <person name="Brusic V."/>
            <person name="Quackenbush J."/>
            <person name="Wahlestedt C."/>
            <person name="Mattick J.S."/>
            <person name="Hume D.A."/>
            <person name="Kai C."/>
            <person name="Sasaki D."/>
            <person name="Tomaru Y."/>
            <person name="Fukuda S."/>
            <person name="Kanamori-Katayama M."/>
            <person name="Suzuki M."/>
            <person name="Aoki J."/>
            <person name="Arakawa T."/>
            <person name="Iida J."/>
            <person name="Imamura K."/>
            <person name="Itoh M."/>
            <person name="Kato T."/>
            <person name="Kawaji H."/>
            <person name="Kawagashira N."/>
            <person name="Kawashima T."/>
            <person name="Kojima M."/>
            <person name="Kondo S."/>
            <person name="Konno H."/>
            <person name="Nakano K."/>
            <person name="Ninomiya N."/>
            <person name="Nishio T."/>
            <person name="Okada M."/>
            <person name="Plessy C."/>
            <person name="Shibata K."/>
            <person name="Shiraki T."/>
            <person name="Suzuki S."/>
            <person name="Tagami M."/>
            <person name="Waki K."/>
            <person name="Watahiki A."/>
            <person name="Okamura-Oho Y."/>
            <person name="Suzuki H."/>
            <person name="Kawai J."/>
            <person name="Hayashizaki Y."/>
        </authorList>
    </citation>
    <scope>NUCLEOTIDE SEQUENCE [LARGE SCALE MRNA]</scope>
    <source>
        <strain>C57BL/6J</strain>
        <tissue>Medulla oblongata</tissue>
        <tissue>Pituitary</tissue>
    </source>
</reference>
<reference key="2">
    <citation type="journal article" date="2004" name="Genome Res.">
        <title>The status, quality, and expansion of the NIH full-length cDNA project: the Mammalian Gene Collection (MGC).</title>
        <authorList>
            <consortium name="The MGC Project Team"/>
        </authorList>
    </citation>
    <scope>NUCLEOTIDE SEQUENCE [LARGE SCALE MRNA]</scope>
    <source>
        <tissue>Brain</tissue>
    </source>
</reference>
<reference key="3">
    <citation type="journal article" date="2008" name="Mol. Endocrinol.">
        <title>GPR30 contributes to estrogen-induced thymic atrophy.</title>
        <authorList>
            <person name="Wang C."/>
            <person name="Dehghani B."/>
            <person name="Magrisso I.J."/>
            <person name="Rick E.A."/>
            <person name="Bonhomme E."/>
            <person name="Cody D.B."/>
            <person name="Elenich L.A."/>
            <person name="Subramanian S."/>
            <person name="Murphy S.J."/>
            <person name="Kelly M.J."/>
            <person name="Rosenbaum J.S."/>
            <person name="Vandenbark A.A."/>
            <person name="Offner H."/>
        </authorList>
    </citation>
    <scope>FUNCTION</scope>
    <scope>DISRUPTION PHENOTYPE</scope>
</reference>
<reference key="4">
    <citation type="journal article" date="2009" name="Biol. Reprod.">
        <title>GPR30 does not mediate estrogenic responses in reproductive organs in mice.</title>
        <authorList>
            <person name="Otto C."/>
            <person name="Fuchs I."/>
            <person name="Kauselmann G."/>
            <person name="Kern H."/>
            <person name="Zevnik B."/>
            <person name="Andreasen P."/>
            <person name="Schwarz G."/>
            <person name="Altmann H."/>
            <person name="Klewer M."/>
            <person name="Schoor M."/>
            <person name="Vonk R."/>
            <person name="Fritzemeier K.H."/>
        </authorList>
    </citation>
    <scope>ABSENCE OF ESTROGEN-BINDING</scope>
    <scope>DISRUPTION PHENOTYPE</scope>
</reference>
<reference key="5">
    <citation type="journal article" date="2009" name="Circ. Res.">
        <title>Regulatory role of G protein-coupled estrogen receptor for vascular function and obesity.</title>
        <authorList>
            <person name="Haas E."/>
            <person name="Bhattacharya I."/>
            <person name="Brailoiu E."/>
            <person name="Damjanovic M."/>
            <person name="Brailoiu G.C."/>
            <person name="Gao X."/>
            <person name="Mueller-Guerre L."/>
            <person name="Marjon N.A."/>
            <person name="Gut A."/>
            <person name="Minotti R."/>
            <person name="Meyer M.R."/>
            <person name="Amann K."/>
            <person name="Ammann E."/>
            <person name="Perez-Dominguez A."/>
            <person name="Genoni M."/>
            <person name="Clegg D.J."/>
            <person name="Dun N.J."/>
            <person name="Resta T.C."/>
            <person name="Prossnitz E.R."/>
            <person name="Barton M."/>
        </authorList>
    </citation>
    <scope>FUNCTION</scope>
    <scope>DISRUPTION PHENOTYPE</scope>
</reference>
<reference key="6">
    <citation type="journal article" date="2009" name="Endocrinology">
        <title>Deletion of the G protein-coupled receptor 30 impairs glucose tolerance, reduces bone growth, increases blood pressure, and eliminates estradiol-stimulated insulin release in female mice.</title>
        <authorList>
            <person name="Martensson U.E."/>
            <person name="Salehi S.A."/>
            <person name="Windahl S."/>
            <person name="Gomez M.F."/>
            <person name="Sward K."/>
            <person name="Daszkiewicz-Nilsson J."/>
            <person name="Wendt A."/>
            <person name="Andersson N."/>
            <person name="Hellstrand P."/>
            <person name="Grande P.O."/>
            <person name="Owman C."/>
            <person name="Rosen C.J."/>
            <person name="Adamo M.L."/>
            <person name="Lundquist I."/>
            <person name="Rorsman P."/>
            <person name="Nilsson B.O."/>
            <person name="Ohlsson C."/>
            <person name="Olde B."/>
            <person name="Leeb-Lundberg L.M."/>
        </authorList>
    </citation>
    <scope>FUNCTION</scope>
    <scope>DISRUPTION PHENOTYPE</scope>
</reference>
<reference key="7">
    <citation type="journal article" date="2009" name="J. Endocrinol.">
        <title>Localisation of GPR30, a novel G protein-coupled oestrogen receptor, suggests multiple functions in rodent brain and peripheral tissues.</title>
        <authorList>
            <person name="Hazell G.G."/>
            <person name="Yao S.T."/>
            <person name="Roper J.A."/>
            <person name="Prossnitz E.R."/>
            <person name="O'Carroll A.M."/>
            <person name="Lolait S.J."/>
        </authorList>
    </citation>
    <scope>SUBCELLULAR LOCATION</scope>
    <scope>TISSUE SPECIFICITY</scope>
</reference>
<reference key="8">
    <citation type="journal article" date="2009" name="Nat. Chem. Biol.">
        <title>In vivo effects of a GPR30 antagonist.</title>
        <authorList>
            <person name="Dennis M.K."/>
            <person name="Burai R."/>
            <person name="Ramesh C."/>
            <person name="Petrie W.K."/>
            <person name="Alcon S.N."/>
            <person name="Nayak T.K."/>
            <person name="Bologa C.G."/>
            <person name="Leitao A."/>
            <person name="Brailoiu E."/>
            <person name="Deliu E."/>
            <person name="Dun N.J."/>
            <person name="Sklar L.A."/>
            <person name="Hathaway H.J."/>
            <person name="Arterburn J.B."/>
            <person name="Oprea T.I."/>
            <person name="Prossnitz E.R."/>
        </authorList>
    </citation>
    <scope>FUNCTION</scope>
</reference>
<reference key="9">
    <citation type="journal article" date="2011" name="Endocrinology">
        <title>Mechanisms of estradiol-induced insulin secretion by the G protein-coupled estrogen receptor GPR30/GPER in pancreatic beta-cells.</title>
        <authorList>
            <person name="Sharma G."/>
            <person name="Prossnitz E.R."/>
        </authorList>
    </citation>
    <scope>FUNCTION</scope>
</reference>
<reference key="10">
    <citation type="journal article" date="2011" name="J. Bone Miner. Res.">
        <title>GPR30 deficiency causes increased bone mass, mineralization, and growth plate proliferative activity in male mice.</title>
        <authorList>
            <person name="Ford J."/>
            <person name="Hajibeigi A."/>
            <person name="Long M."/>
            <person name="Hahner L."/>
            <person name="Gore C."/>
            <person name="Hsieh J.T."/>
            <person name="Clegg D."/>
            <person name="Zerwekh J."/>
            <person name="Oz O.K."/>
        </authorList>
    </citation>
    <scope>FUNCTION</scope>
    <scope>DISRUPTION PHENOTYPE</scope>
</reference>
<reference key="11">
    <citation type="journal article" date="2011" name="J. Vasc. Res.">
        <title>The GPER1 agonist G-1 attenuates endothelial cell proliferation by inhibiting DNA synthesis and accumulating cells in the S and G2 phases of the cell cycle.</title>
        <authorList>
            <person name="Holm A."/>
            <person name="Baldetorp B."/>
            <person name="Olde B."/>
            <person name="Leeb-Lundberg L.M."/>
            <person name="Nilsson B.O."/>
        </authorList>
    </citation>
    <scope>FUNCTION</scope>
    <scope>TISSUE SPECIFICITY</scope>
</reference>
<reference key="12">
    <citation type="journal article" date="2011" name="Mol. Pharmacol.">
        <title>G protein-coupled estrogen receptor 1/G protein-coupled receptor 30 localizes in the plasma membrane and traffics intracellularly on cytokeratin intermediate filaments.</title>
        <authorList>
            <person name="Sanden C."/>
            <person name="Broselid S."/>
            <person name="Cornmark L."/>
            <person name="Andersson K."/>
            <person name="Daszkiewicz-Nilsson J."/>
            <person name="Martensson U.E."/>
            <person name="Olde B."/>
            <person name="Leeb-Lundberg L.M."/>
        </authorList>
    </citation>
    <scope>GLYCOSYLATION</scope>
    <scope>SUBCELLULAR LOCATION</scope>
</reference>
<reference key="13">
    <citation type="journal article" date="2012" name="J. Neurosci.">
        <title>G-protein-coupled receptor 30 mediates rapid neuroprotective effects of estrogen via depression of NR2B-containing NMDA receptors.</title>
        <authorList>
            <person name="Liu S.B."/>
            <person name="Zhang N."/>
            <person name="Guo Y.Y."/>
            <person name="Zhao R."/>
            <person name="Shi T.Y."/>
            <person name="Feng S.F."/>
            <person name="Wang S.Q."/>
            <person name="Yang Q."/>
            <person name="Li X.Q."/>
            <person name="Wu Y.M."/>
            <person name="Ma L."/>
            <person name="Hou Y."/>
            <person name="Xiong L.Z."/>
            <person name="Zhang W."/>
            <person name="Zhao M.G."/>
        </authorList>
    </citation>
    <scope>FUNCTION</scope>
    <scope>SUBCELLULAR LOCATION</scope>
</reference>
<reference key="14">
    <citation type="journal article" date="2012" name="Steroids">
        <title>Role of ERbeta and GPR30 in the endocrine pancreas: A matter of estrogen dose.</title>
        <authorList>
            <person name="Ropero A.B."/>
            <person name="Pang Y."/>
            <person name="Alonso-Magdalena P."/>
            <person name="Thomas P."/>
            <person name="Nadal A."/>
        </authorList>
    </citation>
    <scope>TISSUE SPECIFICITY</scope>
</reference>
<reference key="15">
    <citation type="journal article" date="2013" name="Gen. Comp. Endocrinol.">
        <title>GPER mediates the inhibitory actions of estrogen on adipogenesis in 3T3-L1 cells through perturbation of mitotic clonal expansion.</title>
        <authorList>
            <person name="Zhu P."/>
            <person name="Yuen J.M."/>
            <person name="Sham K.W."/>
            <person name="Cheng C.H."/>
        </authorList>
    </citation>
    <scope>FUNCTION</scope>
    <scope>SUBCELLULAR LOCATION</scope>
    <scope>TISSUE SPECIFICITY</scope>
    <scope>INDUCTION</scope>
</reference>
<reference key="16">
    <citation type="journal article" date="2013" name="J. Biol. Chem.">
        <title>Post-synaptic density-95 (PSD-95) binding capacity of G-protein-coupled receptor 30 (GPR30), an estrogen receptor that can be identified in hippocampal dendritic spines.</title>
        <authorList>
            <person name="Akama K.T."/>
            <person name="Thompson L.I."/>
            <person name="Milner T.A."/>
            <person name="McEwen B.S."/>
        </authorList>
    </citation>
    <scope>SUBUNIT</scope>
    <scope>MUTAGENESIS OF VAL-375</scope>
</reference>
<reference key="17">
    <citation type="journal article" date="2013" name="J. Mol. Endocrinol.">
        <title>G-protein-coupled receptor 30 interacts with receptor activity-modifying protein 3 and confers sex-dependent cardioprotection.</title>
        <authorList>
            <person name="Lenhart P.M."/>
            <person name="Broselid S."/>
            <person name="Barrick C.J."/>
            <person name="Leeb-Lundberg L.M."/>
            <person name="Caron K.M."/>
        </authorList>
    </citation>
    <scope>FUNCTION</scope>
    <scope>SUBCELLULAR LOCATION</scope>
    <scope>TISSUE SPECIFICITY</scope>
</reference>
<reference key="18">
    <citation type="journal article" date="2013" name="Mol. Cell. Endocrinol.">
        <title>G protein-coupled estrogen receptor is required for the neuritogenic mechanism of 17beta-estradiol in developing hippocampal neurons.</title>
        <authorList>
            <person name="Ruiz-Palmero I."/>
            <person name="Hernando M."/>
            <person name="Garcia-Segura L.M."/>
            <person name="Arevalo M.A."/>
        </authorList>
    </citation>
    <scope>FUNCTION</scope>
    <scope>TISSUE SPECIFICITY</scope>
</reference>
<reference key="19">
    <citation type="journal article" date="2010" name="Steroids">
        <title>A critical review of fundamental controversies in the field of GPR30 research.</title>
        <authorList>
            <person name="Langer G."/>
            <person name="Bader B."/>
            <person name="Meoli L."/>
            <person name="Isensee J."/>
            <person name="Delbeck M."/>
            <person name="Noppinger P.R."/>
            <person name="Otto C."/>
        </authorList>
    </citation>
    <scope>REVIEW</scope>
</reference>
<organism>
    <name type="scientific">Mus musculus</name>
    <name type="common">Mouse</name>
    <dbReference type="NCBI Taxonomy" id="10090"/>
    <lineage>
        <taxon>Eukaryota</taxon>
        <taxon>Metazoa</taxon>
        <taxon>Chordata</taxon>
        <taxon>Craniata</taxon>
        <taxon>Vertebrata</taxon>
        <taxon>Euteleostomi</taxon>
        <taxon>Mammalia</taxon>
        <taxon>Eutheria</taxon>
        <taxon>Euarchontoglires</taxon>
        <taxon>Glires</taxon>
        <taxon>Rodentia</taxon>
        <taxon>Myomorpha</taxon>
        <taxon>Muroidea</taxon>
        <taxon>Muridae</taxon>
        <taxon>Murinae</taxon>
        <taxon>Mus</taxon>
        <taxon>Mus</taxon>
    </lineage>
</organism>
<name>GPER1_MOUSE</name>
<comment type="function">
    <text evidence="5 7 8 10 11 13 14 16 18 19 20">G-protein coupled estrogen receptor that binds to 17-beta-estradiol (E2) with high affinity, leading to rapid and transient activation of numerous intracellular signaling pathways. Stimulates cAMP production, calcium mobilization and tyrosine kinase Src inducing the release of heparin-bound epidermal growth factor (HB-EGF) and subsequent transactivation of the epidermal growth factor receptor (EGFR), activating downstream signaling pathways such as PI3K/Akt and ERK/MAPK. Mediates pleiotropic functions among others in the cardiovascular, endocrine, reproductive, immune and central nervous systems. Has a role in cardioprotection by reducing cardiac hypertrophy and perivascular fibrosis in a RAMP3-dependent manner. Regulates arterial blood pressure by stimulating vasodilation and reducing vascular smooth muscle and microvascular endothelial cell proliferation. Plays a role in blood glucose homeostasis contributing to the insulin secretion response by pancreatic beta cells. Triggers mitochondrial apoptosis during pachytene spermatocyte differentiation. Stimulates uterine epithelial cell proliferation. Enhances uterine contractility in response to oxytocin. Contributes to thymic atrophy by inducing apoptosis. Attenuates TNF-mediated endothelial expression of leukocyte adhesion molecules. Promotes neuritogenesis in developing hippocampal neurons. Plays a role in acute neuroprotection against NMDA-induced excitotoxic neuronal death. Increases firing activity and intracellular calcium oscillations in luteinizing hormone-releasing hormone (LHRH) neurons. Inhibits early osteoblast proliferation at growth plate during skeletal development. Inhibits mature adipocyte differentiation and lipid accumulation. Involved in the recruitment of beta-arrestin 2 ARRB2 at the plasma membrane in epithelial cells. Also functions as a receptor for aldosterone mediating rapid regulation of vascular contractibility through the PI3K/ERK signaling pathway. Involved in cancer progression regulation. Stimulates cancer-associated fibroblast (CAF) proliferation by a rapid genomic response through the EGFR/ERK transduction pathway. Associated with EGFR, may act as a transcription factor activating growth regulatory genes (c-fos, cyclin D1). Promotes integrin alpha-5/beta-1 and fibronectin (FN) matrix assembly in breast cancer cells.</text>
</comment>
<comment type="subunit">
    <text evidence="1 17 21">Interacts with RAMP3; the interaction confers proper subcellular localization and function in cardioprotection. Interacts with KRT7 and KRT8. Interacts with EGFR; the interaction increases after agonist-induced stimulation in cancer-associated fibroblasts (CAF). Interacts with EGFR and ESR1. Interacts (via C-terminus tail motif) with DLG4 (via N-terminus tandem pair of PDZ domains); the interaction is direct and induces the increase of GPER1 protein levels residing at the plasma membrane surface in a estradiol-independent manner (By similarity). Homodimer (Probable). Heterodimer; heterodimerizes with other G-protein-coupled receptor (GPCRs) like CRHR1, HTR1A and PAQR8.</text>
</comment>
<comment type="subcellular location">
    <subcellularLocation>
        <location evidence="1">Nucleus</location>
    </subcellularLocation>
    <subcellularLocation>
        <location>Cytoplasm</location>
    </subcellularLocation>
    <subcellularLocation>
        <location evidence="1">Cytoplasm</location>
        <location evidence="1">Perinuclear region</location>
    </subcellularLocation>
    <subcellularLocation>
        <location evidence="1">Cytoplasm</location>
        <location evidence="1">Cytoskeleton</location>
    </subcellularLocation>
    <subcellularLocation>
        <location>Cell membrane</location>
        <topology>Multi-pass membrane protein</topology>
    </subcellularLocation>
    <subcellularLocation>
        <location evidence="1">Endoplasmic reticulum membrane</location>
        <topology evidence="1">Multi-pass membrane protein</topology>
    </subcellularLocation>
    <subcellularLocation>
        <location evidence="1">Golgi apparatus membrane</location>
        <topology evidence="1">Multi-pass membrane protein</topology>
    </subcellularLocation>
    <subcellularLocation>
        <location evidence="1">Cell projection</location>
        <location evidence="1">Dendrite</location>
    </subcellularLocation>
    <subcellularLocation>
        <location evidence="1">Cytoplasmic vesicle membrane</location>
        <topology evidence="1">Multi-pass membrane protein</topology>
    </subcellularLocation>
    <subcellularLocation>
        <location evidence="1">Early endosome</location>
    </subcellularLocation>
    <subcellularLocation>
        <location evidence="1">Recycling endosome</location>
    </subcellularLocation>
    <subcellularLocation>
        <location evidence="1">Golgi apparatus</location>
        <location evidence="1">trans-Golgi network</location>
    </subcellularLocation>
    <subcellularLocation>
        <location evidence="1">Cell projection</location>
        <location evidence="1">Dendritic spine membrane</location>
        <topology evidence="1">Multi-pass membrane protein</topology>
    </subcellularLocation>
    <subcellularLocation>
        <location evidence="1">Cell projection</location>
        <location evidence="1">Axon</location>
    </subcellularLocation>
    <subcellularLocation>
        <location evidence="1">Postsynaptic density</location>
    </subcellularLocation>
    <subcellularLocation>
        <location evidence="1">Mitochondrion membrane</location>
        <topology evidence="1">Multi-pass membrane protein</topology>
    </subcellularLocation>
    <text evidence="1">Colocalized with BSN to the active zone of presynaptic density. Colocalized with DLG4/PSD95 and neurabin-2 PPP1R9B in neuronal synaptosomes. Endocytosed in an agonist- and arrestin-independent manner. Colocalized with RAMP3 and clathrin-coated pits at the plasma membrane. Colocalized with transferrin receptor at the plasma membrane and perinuclear region. Accumulated and colocalized with RAB11 proteins in recycling endosomes and trans-Golgi network (TGN), but does neither recycle back to the cell surface nor traffics to late endosome or lysosome. Colocalized with calnexin in the endoplasmic reticulum. Traffics to intracellular sites via cytokeratin intermediate filaments like KRT7 and KRT8 after constitutive endocytosis in epithelial cells. Colocalized with EGFR in the nucleus of agonist-induced cancer-associated fibroblasts (CAF) (By similarity).</text>
</comment>
<comment type="tissue specificity">
    <text evidence="9 13 15 18 19 20">Expressed in brain, heart, spleen, preadipocytes, mature adipocytes and primary hippocampal neurons. Expressed in neurons of the hippocampus, hypothalamic paraventricular nucleus (PVH), supraoptic nucleus (SON) and the median eminence. Expressed in the nucleus ambiguous (at protein level). Expressed in brain, pituitary gland, adrenal medulla, renal pelvis, ovary, endothelial cells, visceral fat tissues and islets of Langerhans.</text>
</comment>
<comment type="induction">
    <text evidence="20">Up-regulated during adipogenesis.</text>
</comment>
<comment type="PTM">
    <text evidence="1">Ubiquitinated; ubiquitination occurs at the plasma membrane and leads to proteasome-mediated degradation.</text>
</comment>
<comment type="PTM">
    <text evidence="12">N-glycosylated.</text>
</comment>
<comment type="disruption phenotype">
    <text evidence="5 6 7 8 11">Strong variations in phenotypes, probably depending on the distinct targeting strategies, genetic background and experimental conditions used in the different experiments. According to PubMed:18063692, mice are viable and fertile and do not display any gross physical, immunological, reproductive and neurological abnormalities, but show 17-beta-estradiol (E2)-induced alleviated thymic atrophy. According to PubMed:20734455, male mice display increased body size, femur length, bone mass and cell proliferative activity within the growth plate. According to PubMed:18845638, female mice, but not male, show reduced body weight and skeletal growth, hyperglycemia, impaired glucose tolerance with reduced glucose-stimulated insulin release and increased blood pressure. According to PubMed:19179659 mice show increased body weight, visceral adiposity, vascular tone and blood pressure. No visible phenotype according to PubMed:18799753.</text>
</comment>
<comment type="similarity">
    <text evidence="4">Belongs to the G-protein coupled receptor 1 family.</text>
</comment>
<feature type="chain" id="PRO_0000069311" description="G-protein coupled estrogen receptor 1">
    <location>
        <begin position="1"/>
        <end position="375"/>
    </location>
</feature>
<feature type="topological domain" description="Extracellular" evidence="3">
    <location>
        <begin position="1"/>
        <end position="62"/>
    </location>
</feature>
<feature type="transmembrane region" description="Helical; Name=1" evidence="3">
    <location>
        <begin position="63"/>
        <end position="84"/>
    </location>
</feature>
<feature type="topological domain" description="Cytoplasmic" evidence="3">
    <location>
        <begin position="85"/>
        <end position="96"/>
    </location>
</feature>
<feature type="transmembrane region" description="Helical; Name=2" evidence="3">
    <location>
        <begin position="97"/>
        <end position="120"/>
    </location>
</feature>
<feature type="topological domain" description="Extracellular" evidence="3">
    <location>
        <begin position="121"/>
        <end position="132"/>
    </location>
</feature>
<feature type="transmembrane region" description="Helical; Name=3" evidence="3">
    <location>
        <begin position="133"/>
        <end position="153"/>
    </location>
</feature>
<feature type="topological domain" description="Cytoplasmic" evidence="3">
    <location>
        <begin position="154"/>
        <end position="175"/>
    </location>
</feature>
<feature type="transmembrane region" description="Helical; Name=4" evidence="3">
    <location>
        <begin position="176"/>
        <end position="194"/>
    </location>
</feature>
<feature type="topological domain" description="Extracellular" evidence="3">
    <location>
        <begin position="195"/>
        <end position="220"/>
    </location>
</feature>
<feature type="transmembrane region" description="Helical; Name=5" evidence="3">
    <location>
        <begin position="221"/>
        <end position="236"/>
    </location>
</feature>
<feature type="topological domain" description="Cytoplasmic" evidence="3">
    <location>
        <begin position="237"/>
        <end position="259"/>
    </location>
</feature>
<feature type="transmembrane region" description="Helical; Name=6" evidence="3">
    <location>
        <begin position="260"/>
        <end position="280"/>
    </location>
</feature>
<feature type="topological domain" description="Extracellular" evidence="3">
    <location>
        <begin position="281"/>
        <end position="306"/>
    </location>
</feature>
<feature type="transmembrane region" description="Helical; Name=7" evidence="3">
    <location>
        <begin position="307"/>
        <end position="327"/>
    </location>
</feature>
<feature type="topological domain" description="Cytoplasmic" evidence="3">
    <location>
        <begin position="328"/>
        <end position="375"/>
    </location>
</feature>
<feature type="modified residue" description="N-acetylmethionine" evidence="2">
    <location>
        <position position="1"/>
    </location>
</feature>
<feature type="glycosylation site" description="N-linked (GlcNAc...) asparagine" evidence="3">
    <location>
        <position position="32"/>
    </location>
</feature>
<feature type="glycosylation site" description="N-linked (GlcNAc...) asparagine" evidence="3">
    <location>
        <position position="44"/>
    </location>
</feature>
<feature type="disulfide bond" evidence="4">
    <location>
        <begin position="130"/>
        <end position="207"/>
    </location>
</feature>
<feature type="mutagenesis site" description="Loss of interaction with DLG4." evidence="17">
    <original>V</original>
    <variation>A</variation>
    <location>
        <position position="375"/>
    </location>
</feature>
<feature type="sequence conflict" description="In Ref. 1; BAC26930." evidence="21" ref="1">
    <original>F</original>
    <variation>I</variation>
    <location>
        <position position="314"/>
    </location>
</feature>
<feature type="sequence conflict" description="In Ref. 1; BAB31118." evidence="21" ref="1">
    <original>V</original>
    <variation>I</variation>
    <location>
        <position position="369"/>
    </location>
</feature>
<proteinExistence type="evidence at protein level"/>
<keyword id="KW-0007">Acetylation</keyword>
<keyword id="KW-0053">Apoptosis</keyword>
<keyword id="KW-0131">Cell cycle</keyword>
<keyword id="KW-1003">Cell membrane</keyword>
<keyword id="KW-0966">Cell projection</keyword>
<keyword id="KW-0963">Cytoplasm</keyword>
<keyword id="KW-0968">Cytoplasmic vesicle</keyword>
<keyword id="KW-0206">Cytoskeleton</keyword>
<keyword id="KW-0221">Differentiation</keyword>
<keyword id="KW-1015">Disulfide bond</keyword>
<keyword id="KW-0256">Endoplasmic reticulum</keyword>
<keyword id="KW-0967">Endosome</keyword>
<keyword id="KW-0297">G-protein coupled receptor</keyword>
<keyword id="KW-0325">Glycoprotein</keyword>
<keyword id="KW-0333">Golgi apparatus</keyword>
<keyword id="KW-0391">Immunity</keyword>
<keyword id="KW-0395">Inflammatory response</keyword>
<keyword id="KW-0399">Innate immunity</keyword>
<keyword id="KW-0472">Membrane</keyword>
<keyword id="KW-0496">Mitochondrion</keyword>
<keyword id="KW-0524">Neurogenesis</keyword>
<keyword id="KW-0539">Nucleus</keyword>
<keyword id="KW-0628">Postsynaptic cell membrane</keyword>
<keyword id="KW-0675">Receptor</keyword>
<keyword id="KW-1185">Reference proteome</keyword>
<keyword id="KW-0770">Synapse</keyword>
<keyword id="KW-0807">Transducer</keyword>
<keyword id="KW-0812">Transmembrane</keyword>
<keyword id="KW-1133">Transmembrane helix</keyword>
<keyword id="KW-0832">Ubl conjugation</keyword>
<accession>Q8BMP4</accession>
<accession>B2RRW0</accession>
<accession>Q9D392</accession>